<gene>
    <name evidence="1" type="primary">hemL</name>
    <name type="ordered locus">ROP_17110</name>
</gene>
<reference key="1">
    <citation type="submission" date="2009-03" db="EMBL/GenBank/DDBJ databases">
        <title>Comparison of the complete genome sequences of Rhodococcus erythropolis PR4 and Rhodococcus opacus B4.</title>
        <authorList>
            <person name="Takarada H."/>
            <person name="Sekine M."/>
            <person name="Hosoyama A."/>
            <person name="Yamada R."/>
            <person name="Fujisawa T."/>
            <person name="Omata S."/>
            <person name="Shimizu A."/>
            <person name="Tsukatani N."/>
            <person name="Tanikawa S."/>
            <person name="Fujita N."/>
            <person name="Harayama S."/>
        </authorList>
    </citation>
    <scope>NUCLEOTIDE SEQUENCE [LARGE SCALE GENOMIC DNA]</scope>
    <source>
        <strain>B4</strain>
    </source>
</reference>
<protein>
    <recommendedName>
        <fullName evidence="1">Glutamate-1-semialdehyde 2,1-aminomutase</fullName>
        <shortName evidence="1">GSA</shortName>
        <ecNumber evidence="1">5.4.3.8</ecNumber>
    </recommendedName>
    <alternativeName>
        <fullName evidence="1">Glutamate-1-semialdehyde aminotransferase</fullName>
        <shortName evidence="1">GSA-AT</shortName>
    </alternativeName>
</protein>
<sequence>MTVSSGDPDVHASRSAQLFERADLVIPGGVNSPVRAFHSVGGTPRFIREASGYTLTDVDGNDYVDLICSWGPMILGHAHPAVVEAVQTAATTGLSFGAPTEGEIELAEEIVRRVAPVEKVRLVNSGTEATMSAVRLARGFTGRTKVLKFSGCYHGHVDALLADAGSGLATFGLPTSPGVTGAQAEDTIVVPYNDLDAVAAAFAANEGQIACVITEAAAGNMGAVAPQPGFNEGLRTLTRDNGALLIMDEVMTGFRVSSAGWYGLDGVAGDLYTFGKVMSGGLPAAAFGGRADVMAHLAPAGPVYQAGTLSGNPVAVAAGLASLRAADQGVYDALERNSATLRTLLSDALTAASVPHRVQTAGTMLSVFFSEDPVTNYEEAKAAQTWRFPAFFHGLLSRGVYPPPSAFEAWFVSAAMDDTAFSIIADALPSAAKAAAAAVQP</sequence>
<keyword id="KW-0963">Cytoplasm</keyword>
<keyword id="KW-0413">Isomerase</keyword>
<keyword id="KW-0627">Porphyrin biosynthesis</keyword>
<keyword id="KW-0663">Pyridoxal phosphate</keyword>
<feature type="chain" id="PRO_1000201030" description="Glutamate-1-semialdehyde 2,1-aminomutase">
    <location>
        <begin position="1"/>
        <end position="441"/>
    </location>
</feature>
<feature type="modified residue" description="N6-(pyridoxal phosphate)lysine" evidence="1">
    <location>
        <position position="276"/>
    </location>
</feature>
<accession>C1AZ30</accession>
<name>GSA_RHOOB</name>
<dbReference type="EC" id="5.4.3.8" evidence="1"/>
<dbReference type="EMBL" id="AP011115">
    <property type="protein sequence ID" value="BAH49958.1"/>
    <property type="molecule type" value="Genomic_DNA"/>
</dbReference>
<dbReference type="RefSeq" id="WP_012688920.1">
    <property type="nucleotide sequence ID" value="NC_012522.1"/>
</dbReference>
<dbReference type="SMR" id="C1AZ30"/>
<dbReference type="STRING" id="632772.ROP_17110"/>
<dbReference type="KEGG" id="rop:ROP_17110"/>
<dbReference type="PATRIC" id="fig|632772.20.peg.1793"/>
<dbReference type="HOGENOM" id="CLU_016922_1_5_11"/>
<dbReference type="OrthoDB" id="9801052at2"/>
<dbReference type="UniPathway" id="UPA00251">
    <property type="reaction ID" value="UER00317"/>
</dbReference>
<dbReference type="Proteomes" id="UP000002212">
    <property type="component" value="Chromosome"/>
</dbReference>
<dbReference type="GO" id="GO:0005737">
    <property type="term" value="C:cytoplasm"/>
    <property type="evidence" value="ECO:0007669"/>
    <property type="project" value="UniProtKB-SubCell"/>
</dbReference>
<dbReference type="GO" id="GO:0042286">
    <property type="term" value="F:glutamate-1-semialdehyde 2,1-aminomutase activity"/>
    <property type="evidence" value="ECO:0007669"/>
    <property type="project" value="UniProtKB-UniRule"/>
</dbReference>
<dbReference type="GO" id="GO:0030170">
    <property type="term" value="F:pyridoxal phosphate binding"/>
    <property type="evidence" value="ECO:0007669"/>
    <property type="project" value="InterPro"/>
</dbReference>
<dbReference type="GO" id="GO:0008483">
    <property type="term" value="F:transaminase activity"/>
    <property type="evidence" value="ECO:0007669"/>
    <property type="project" value="InterPro"/>
</dbReference>
<dbReference type="GO" id="GO:0006782">
    <property type="term" value="P:protoporphyrinogen IX biosynthetic process"/>
    <property type="evidence" value="ECO:0007669"/>
    <property type="project" value="UniProtKB-UniRule"/>
</dbReference>
<dbReference type="CDD" id="cd00610">
    <property type="entry name" value="OAT_like"/>
    <property type="match status" value="1"/>
</dbReference>
<dbReference type="FunFam" id="3.40.640.10:FF:000021">
    <property type="entry name" value="Glutamate-1-semialdehyde 2,1-aminomutase"/>
    <property type="match status" value="1"/>
</dbReference>
<dbReference type="Gene3D" id="3.90.1150.10">
    <property type="entry name" value="Aspartate Aminotransferase, domain 1"/>
    <property type="match status" value="1"/>
</dbReference>
<dbReference type="Gene3D" id="3.40.640.10">
    <property type="entry name" value="Type I PLP-dependent aspartate aminotransferase-like (Major domain)"/>
    <property type="match status" value="1"/>
</dbReference>
<dbReference type="HAMAP" id="MF_00375">
    <property type="entry name" value="HemL_aminotrans_3"/>
    <property type="match status" value="1"/>
</dbReference>
<dbReference type="InterPro" id="IPR004639">
    <property type="entry name" value="4pyrrol_synth_GluAld_NH2Trfase"/>
</dbReference>
<dbReference type="InterPro" id="IPR005814">
    <property type="entry name" value="Aminotrans_3"/>
</dbReference>
<dbReference type="InterPro" id="IPR049704">
    <property type="entry name" value="Aminotrans_3_PPA_site"/>
</dbReference>
<dbReference type="InterPro" id="IPR015424">
    <property type="entry name" value="PyrdxlP-dep_Trfase"/>
</dbReference>
<dbReference type="InterPro" id="IPR015421">
    <property type="entry name" value="PyrdxlP-dep_Trfase_major"/>
</dbReference>
<dbReference type="InterPro" id="IPR015422">
    <property type="entry name" value="PyrdxlP-dep_Trfase_small"/>
</dbReference>
<dbReference type="NCBIfam" id="TIGR00713">
    <property type="entry name" value="hemL"/>
    <property type="match status" value="1"/>
</dbReference>
<dbReference type="NCBIfam" id="NF000818">
    <property type="entry name" value="PRK00062.1"/>
    <property type="match status" value="1"/>
</dbReference>
<dbReference type="PANTHER" id="PTHR43713">
    <property type="entry name" value="GLUTAMATE-1-SEMIALDEHYDE 2,1-AMINOMUTASE"/>
    <property type="match status" value="1"/>
</dbReference>
<dbReference type="PANTHER" id="PTHR43713:SF3">
    <property type="entry name" value="GLUTAMATE-1-SEMIALDEHYDE 2,1-AMINOMUTASE 1, CHLOROPLASTIC-RELATED"/>
    <property type="match status" value="1"/>
</dbReference>
<dbReference type="Pfam" id="PF00202">
    <property type="entry name" value="Aminotran_3"/>
    <property type="match status" value="1"/>
</dbReference>
<dbReference type="SUPFAM" id="SSF53383">
    <property type="entry name" value="PLP-dependent transferases"/>
    <property type="match status" value="1"/>
</dbReference>
<dbReference type="PROSITE" id="PS00600">
    <property type="entry name" value="AA_TRANSFER_CLASS_3"/>
    <property type="match status" value="1"/>
</dbReference>
<comment type="catalytic activity">
    <reaction evidence="1">
        <text>(S)-4-amino-5-oxopentanoate = 5-aminolevulinate</text>
        <dbReference type="Rhea" id="RHEA:14265"/>
        <dbReference type="ChEBI" id="CHEBI:57501"/>
        <dbReference type="ChEBI" id="CHEBI:356416"/>
        <dbReference type="EC" id="5.4.3.8"/>
    </reaction>
</comment>
<comment type="cofactor">
    <cofactor evidence="1">
        <name>pyridoxal 5'-phosphate</name>
        <dbReference type="ChEBI" id="CHEBI:597326"/>
    </cofactor>
</comment>
<comment type="pathway">
    <text evidence="1">Porphyrin-containing compound metabolism; protoporphyrin-IX biosynthesis; 5-aminolevulinate from L-glutamyl-tRNA(Glu): step 2/2.</text>
</comment>
<comment type="subunit">
    <text evidence="1">Homodimer.</text>
</comment>
<comment type="subcellular location">
    <subcellularLocation>
        <location evidence="1">Cytoplasm</location>
    </subcellularLocation>
</comment>
<comment type="similarity">
    <text evidence="1">Belongs to the class-III pyridoxal-phosphate-dependent aminotransferase family. HemL subfamily.</text>
</comment>
<evidence type="ECO:0000255" key="1">
    <source>
        <dbReference type="HAMAP-Rule" id="MF_00375"/>
    </source>
</evidence>
<proteinExistence type="inferred from homology"/>
<organism>
    <name type="scientific">Rhodococcus opacus (strain B4)</name>
    <dbReference type="NCBI Taxonomy" id="632772"/>
    <lineage>
        <taxon>Bacteria</taxon>
        <taxon>Bacillati</taxon>
        <taxon>Actinomycetota</taxon>
        <taxon>Actinomycetes</taxon>
        <taxon>Mycobacteriales</taxon>
        <taxon>Nocardiaceae</taxon>
        <taxon>Rhodococcus</taxon>
    </lineage>
</organism>